<evidence type="ECO:0000255" key="1">
    <source>
        <dbReference type="HAMAP-Rule" id="MF_01456"/>
    </source>
</evidence>
<protein>
    <recommendedName>
        <fullName evidence="1">NAD(P)H-quinone oxidoreductase subunit 4L, chloroplastic</fullName>
        <ecNumber evidence="1">7.1.1.-</ecNumber>
    </recommendedName>
    <alternativeName>
        <fullName evidence="1">NAD(P)H dehydrogenase subunit 4L</fullName>
    </alternativeName>
    <alternativeName>
        <fullName evidence="1">NADH-plastoquinone oxidoreductase subunit 4L</fullName>
    </alternativeName>
</protein>
<feature type="chain" id="PRO_0000360350" description="NAD(P)H-quinone oxidoreductase subunit 4L, chloroplastic">
    <location>
        <begin position="1"/>
        <end position="101"/>
    </location>
</feature>
<feature type="transmembrane region" description="Helical" evidence="1">
    <location>
        <begin position="2"/>
        <end position="22"/>
    </location>
</feature>
<feature type="transmembrane region" description="Helical" evidence="1">
    <location>
        <begin position="32"/>
        <end position="52"/>
    </location>
</feature>
<feature type="transmembrane region" description="Helical" evidence="1">
    <location>
        <begin position="61"/>
        <end position="81"/>
    </location>
</feature>
<comment type="function">
    <text evidence="1">NDH shuttles electrons from NAD(P)H:plastoquinone, via FMN and iron-sulfur (Fe-S) centers, to quinones in the photosynthetic chain and possibly in a chloroplast respiratory chain. The immediate electron acceptor for the enzyme in this species is believed to be plastoquinone. Couples the redox reaction to proton translocation, and thus conserves the redox energy in a proton gradient.</text>
</comment>
<comment type="catalytic activity">
    <reaction evidence="1">
        <text>a plastoquinone + NADH + (n+1) H(+)(in) = a plastoquinol + NAD(+) + n H(+)(out)</text>
        <dbReference type="Rhea" id="RHEA:42608"/>
        <dbReference type="Rhea" id="RHEA-COMP:9561"/>
        <dbReference type="Rhea" id="RHEA-COMP:9562"/>
        <dbReference type="ChEBI" id="CHEBI:15378"/>
        <dbReference type="ChEBI" id="CHEBI:17757"/>
        <dbReference type="ChEBI" id="CHEBI:57540"/>
        <dbReference type="ChEBI" id="CHEBI:57945"/>
        <dbReference type="ChEBI" id="CHEBI:62192"/>
    </reaction>
</comment>
<comment type="catalytic activity">
    <reaction evidence="1">
        <text>a plastoquinone + NADPH + (n+1) H(+)(in) = a plastoquinol + NADP(+) + n H(+)(out)</text>
        <dbReference type="Rhea" id="RHEA:42612"/>
        <dbReference type="Rhea" id="RHEA-COMP:9561"/>
        <dbReference type="Rhea" id="RHEA-COMP:9562"/>
        <dbReference type="ChEBI" id="CHEBI:15378"/>
        <dbReference type="ChEBI" id="CHEBI:17757"/>
        <dbReference type="ChEBI" id="CHEBI:57783"/>
        <dbReference type="ChEBI" id="CHEBI:58349"/>
        <dbReference type="ChEBI" id="CHEBI:62192"/>
    </reaction>
</comment>
<comment type="subunit">
    <text evidence="1">NDH is composed of at least 16 different subunits, 5 of which are encoded in the nucleus.</text>
</comment>
<comment type="subcellular location">
    <subcellularLocation>
        <location evidence="1">Plastid</location>
        <location evidence="1">Chloroplast thylakoid membrane</location>
        <topology evidence="1">Multi-pass membrane protein</topology>
    </subcellularLocation>
</comment>
<comment type="similarity">
    <text evidence="1">Belongs to the complex I subunit 4L family.</text>
</comment>
<accession>A1XG07</accession>
<geneLocation type="chloroplast"/>
<dbReference type="EC" id="7.1.1.-" evidence="1"/>
<dbReference type="EMBL" id="DQ354691">
    <property type="protein sequence ID" value="ABC60511.1"/>
    <property type="molecule type" value="Genomic_DNA"/>
</dbReference>
<dbReference type="RefSeq" id="YP_001001586.1">
    <property type="nucleotide sequence ID" value="NC_008788.1"/>
</dbReference>
<dbReference type="SMR" id="A1XG07"/>
<dbReference type="GeneID" id="4699582"/>
<dbReference type="GO" id="GO:0009535">
    <property type="term" value="C:chloroplast thylakoid membrane"/>
    <property type="evidence" value="ECO:0007669"/>
    <property type="project" value="UniProtKB-SubCell"/>
</dbReference>
<dbReference type="GO" id="GO:0030964">
    <property type="term" value="C:NADH dehydrogenase complex"/>
    <property type="evidence" value="ECO:0007669"/>
    <property type="project" value="TreeGrafter"/>
</dbReference>
<dbReference type="GO" id="GO:0016655">
    <property type="term" value="F:oxidoreductase activity, acting on NAD(P)H, quinone or similar compound as acceptor"/>
    <property type="evidence" value="ECO:0007669"/>
    <property type="project" value="UniProtKB-UniRule"/>
</dbReference>
<dbReference type="GO" id="GO:0048038">
    <property type="term" value="F:quinone binding"/>
    <property type="evidence" value="ECO:0007669"/>
    <property type="project" value="UniProtKB-KW"/>
</dbReference>
<dbReference type="GO" id="GO:0042773">
    <property type="term" value="P:ATP synthesis coupled electron transport"/>
    <property type="evidence" value="ECO:0007669"/>
    <property type="project" value="InterPro"/>
</dbReference>
<dbReference type="GO" id="GO:0019684">
    <property type="term" value="P:photosynthesis, light reaction"/>
    <property type="evidence" value="ECO:0007669"/>
    <property type="project" value="UniProtKB-UniRule"/>
</dbReference>
<dbReference type="FunFam" id="1.10.287.3510:FF:000001">
    <property type="entry name" value="NADH-quinone oxidoreductase subunit K"/>
    <property type="match status" value="1"/>
</dbReference>
<dbReference type="Gene3D" id="1.10.287.3510">
    <property type="match status" value="1"/>
</dbReference>
<dbReference type="HAMAP" id="MF_01456">
    <property type="entry name" value="NDH1_NuoK"/>
    <property type="match status" value="1"/>
</dbReference>
<dbReference type="InterPro" id="IPR001133">
    <property type="entry name" value="NADH_UbQ_OxRdtase_chain4L/K"/>
</dbReference>
<dbReference type="InterPro" id="IPR039428">
    <property type="entry name" value="NUOK/Mnh_C1-like"/>
</dbReference>
<dbReference type="NCBIfam" id="NF004320">
    <property type="entry name" value="PRK05715.1-2"/>
    <property type="match status" value="1"/>
</dbReference>
<dbReference type="NCBIfam" id="NF004322">
    <property type="entry name" value="PRK05715.1-4"/>
    <property type="match status" value="1"/>
</dbReference>
<dbReference type="PANTHER" id="PTHR11434:SF16">
    <property type="entry name" value="NADH-UBIQUINONE OXIDOREDUCTASE CHAIN 4L"/>
    <property type="match status" value="1"/>
</dbReference>
<dbReference type="PANTHER" id="PTHR11434">
    <property type="entry name" value="NADH-UBIQUINONE OXIDOREDUCTASE SUBUNIT ND4L"/>
    <property type="match status" value="1"/>
</dbReference>
<dbReference type="Pfam" id="PF00420">
    <property type="entry name" value="Oxidored_q2"/>
    <property type="match status" value="1"/>
</dbReference>
<gene>
    <name evidence="1" type="primary">ndhE</name>
</gene>
<sequence length="101" mass="11195">MMLEHVLVLSAYLFSIGIYGLITSRNMVRALMCLELILNAVNMNLVTFSDLFDSRQLKGDVFSIFVIAIAAAEAAIGPAIVSSIYRNRKSTRINQSNLLNK</sequence>
<organism>
    <name type="scientific">Nuphar advena</name>
    <name type="common">Common spatterdock</name>
    <name type="synonym">Nuphar lutea subsp. advena</name>
    <dbReference type="NCBI Taxonomy" id="77108"/>
    <lineage>
        <taxon>Eukaryota</taxon>
        <taxon>Viridiplantae</taxon>
        <taxon>Streptophyta</taxon>
        <taxon>Embryophyta</taxon>
        <taxon>Tracheophyta</taxon>
        <taxon>Spermatophyta</taxon>
        <taxon>Magnoliopsida</taxon>
        <taxon>Nymphaeales</taxon>
        <taxon>Nymphaeaceae</taxon>
        <taxon>Nuphar</taxon>
    </lineage>
</organism>
<keyword id="KW-0150">Chloroplast</keyword>
<keyword id="KW-0472">Membrane</keyword>
<keyword id="KW-0520">NAD</keyword>
<keyword id="KW-0521">NADP</keyword>
<keyword id="KW-0934">Plastid</keyword>
<keyword id="KW-0618">Plastoquinone</keyword>
<keyword id="KW-0874">Quinone</keyword>
<keyword id="KW-0793">Thylakoid</keyword>
<keyword id="KW-1278">Translocase</keyword>
<keyword id="KW-0812">Transmembrane</keyword>
<keyword id="KW-1133">Transmembrane helix</keyword>
<keyword id="KW-0813">Transport</keyword>
<proteinExistence type="inferred from homology"/>
<name>NU4LC_NUPAD</name>
<reference key="1">
    <citation type="journal article" date="2007" name="BMC Genomics">
        <title>Comparative chloroplast genomics: analyses including new sequences from the angiosperms Nuphar advena and Ranunculus macranthus.</title>
        <authorList>
            <person name="Raubeson L.A."/>
            <person name="Peery R."/>
            <person name="Chumley T.W."/>
            <person name="Dziubek C."/>
            <person name="Fourcade H.M."/>
            <person name="Boore J.L."/>
            <person name="Jansen R.K."/>
        </authorList>
    </citation>
    <scope>NUCLEOTIDE SEQUENCE [LARGE SCALE GENOMIC DNA]</scope>
</reference>